<comment type="function">
    <text evidence="1">Part of the SNAPc complex required for the transcription of both RNA polymerase II and III small-nuclear RNA genes. Binds to the proximal sequence element (PSE), a non-TATA-box basal promoter element common to these 2 types of genes. Recruits TBP and BRF2 to the U6 snRNA TATA box (By similarity).</text>
</comment>
<comment type="subunit">
    <text evidence="1">Part of the SNAPc complex composed of 5 subunits: SNAPC1, SNAPC2, SNAPC3, SNAPC4 and SNAPC5. SNAPC2 interacts with TBP and SNAPC4 (By similarity).</text>
</comment>
<comment type="subcellular location">
    <subcellularLocation>
        <location evidence="1">Nucleus</location>
    </subcellularLocation>
</comment>
<keyword id="KW-0539">Nucleus</keyword>
<keyword id="KW-1185">Reference proteome</keyword>
<keyword id="KW-0804">Transcription</keyword>
<keyword id="KW-0805">Transcription regulation</keyword>
<reference key="1">
    <citation type="journal article" date="2005" name="Science">
        <title>The transcriptional landscape of the mammalian genome.</title>
        <authorList>
            <person name="Carninci P."/>
            <person name="Kasukawa T."/>
            <person name="Katayama S."/>
            <person name="Gough J."/>
            <person name="Frith M.C."/>
            <person name="Maeda N."/>
            <person name="Oyama R."/>
            <person name="Ravasi T."/>
            <person name="Lenhard B."/>
            <person name="Wells C."/>
            <person name="Kodzius R."/>
            <person name="Shimokawa K."/>
            <person name="Bajic V.B."/>
            <person name="Brenner S.E."/>
            <person name="Batalov S."/>
            <person name="Forrest A.R."/>
            <person name="Zavolan M."/>
            <person name="Davis M.J."/>
            <person name="Wilming L.G."/>
            <person name="Aidinis V."/>
            <person name="Allen J.E."/>
            <person name="Ambesi-Impiombato A."/>
            <person name="Apweiler R."/>
            <person name="Aturaliya R.N."/>
            <person name="Bailey T.L."/>
            <person name="Bansal M."/>
            <person name="Baxter L."/>
            <person name="Beisel K.W."/>
            <person name="Bersano T."/>
            <person name="Bono H."/>
            <person name="Chalk A.M."/>
            <person name="Chiu K.P."/>
            <person name="Choudhary V."/>
            <person name="Christoffels A."/>
            <person name="Clutterbuck D.R."/>
            <person name="Crowe M.L."/>
            <person name="Dalla E."/>
            <person name="Dalrymple B.P."/>
            <person name="de Bono B."/>
            <person name="Della Gatta G."/>
            <person name="di Bernardo D."/>
            <person name="Down T."/>
            <person name="Engstrom P."/>
            <person name="Fagiolini M."/>
            <person name="Faulkner G."/>
            <person name="Fletcher C.F."/>
            <person name="Fukushima T."/>
            <person name="Furuno M."/>
            <person name="Futaki S."/>
            <person name="Gariboldi M."/>
            <person name="Georgii-Hemming P."/>
            <person name="Gingeras T.R."/>
            <person name="Gojobori T."/>
            <person name="Green R.E."/>
            <person name="Gustincich S."/>
            <person name="Harbers M."/>
            <person name="Hayashi Y."/>
            <person name="Hensch T.K."/>
            <person name="Hirokawa N."/>
            <person name="Hill D."/>
            <person name="Huminiecki L."/>
            <person name="Iacono M."/>
            <person name="Ikeo K."/>
            <person name="Iwama A."/>
            <person name="Ishikawa T."/>
            <person name="Jakt M."/>
            <person name="Kanapin A."/>
            <person name="Katoh M."/>
            <person name="Kawasawa Y."/>
            <person name="Kelso J."/>
            <person name="Kitamura H."/>
            <person name="Kitano H."/>
            <person name="Kollias G."/>
            <person name="Krishnan S.P."/>
            <person name="Kruger A."/>
            <person name="Kummerfeld S.K."/>
            <person name="Kurochkin I.V."/>
            <person name="Lareau L.F."/>
            <person name="Lazarevic D."/>
            <person name="Lipovich L."/>
            <person name="Liu J."/>
            <person name="Liuni S."/>
            <person name="McWilliam S."/>
            <person name="Madan Babu M."/>
            <person name="Madera M."/>
            <person name="Marchionni L."/>
            <person name="Matsuda H."/>
            <person name="Matsuzawa S."/>
            <person name="Miki H."/>
            <person name="Mignone F."/>
            <person name="Miyake S."/>
            <person name="Morris K."/>
            <person name="Mottagui-Tabar S."/>
            <person name="Mulder N."/>
            <person name="Nakano N."/>
            <person name="Nakauchi H."/>
            <person name="Ng P."/>
            <person name="Nilsson R."/>
            <person name="Nishiguchi S."/>
            <person name="Nishikawa S."/>
            <person name="Nori F."/>
            <person name="Ohara O."/>
            <person name="Okazaki Y."/>
            <person name="Orlando V."/>
            <person name="Pang K.C."/>
            <person name="Pavan W.J."/>
            <person name="Pavesi G."/>
            <person name="Pesole G."/>
            <person name="Petrovsky N."/>
            <person name="Piazza S."/>
            <person name="Reed J."/>
            <person name="Reid J.F."/>
            <person name="Ring B.Z."/>
            <person name="Ringwald M."/>
            <person name="Rost B."/>
            <person name="Ruan Y."/>
            <person name="Salzberg S.L."/>
            <person name="Sandelin A."/>
            <person name="Schneider C."/>
            <person name="Schoenbach C."/>
            <person name="Sekiguchi K."/>
            <person name="Semple C.A."/>
            <person name="Seno S."/>
            <person name="Sessa L."/>
            <person name="Sheng Y."/>
            <person name="Shibata Y."/>
            <person name="Shimada H."/>
            <person name="Shimada K."/>
            <person name="Silva D."/>
            <person name="Sinclair B."/>
            <person name="Sperling S."/>
            <person name="Stupka E."/>
            <person name="Sugiura K."/>
            <person name="Sultana R."/>
            <person name="Takenaka Y."/>
            <person name="Taki K."/>
            <person name="Tammoja K."/>
            <person name="Tan S.L."/>
            <person name="Tang S."/>
            <person name="Taylor M.S."/>
            <person name="Tegner J."/>
            <person name="Teichmann S.A."/>
            <person name="Ueda H.R."/>
            <person name="van Nimwegen E."/>
            <person name="Verardo R."/>
            <person name="Wei C.L."/>
            <person name="Yagi K."/>
            <person name="Yamanishi H."/>
            <person name="Zabarovsky E."/>
            <person name="Zhu S."/>
            <person name="Zimmer A."/>
            <person name="Hide W."/>
            <person name="Bult C."/>
            <person name="Grimmond S.M."/>
            <person name="Teasdale R.D."/>
            <person name="Liu E.T."/>
            <person name="Brusic V."/>
            <person name="Quackenbush J."/>
            <person name="Wahlestedt C."/>
            <person name="Mattick J.S."/>
            <person name="Hume D.A."/>
            <person name="Kai C."/>
            <person name="Sasaki D."/>
            <person name="Tomaru Y."/>
            <person name="Fukuda S."/>
            <person name="Kanamori-Katayama M."/>
            <person name="Suzuki M."/>
            <person name="Aoki J."/>
            <person name="Arakawa T."/>
            <person name="Iida J."/>
            <person name="Imamura K."/>
            <person name="Itoh M."/>
            <person name="Kato T."/>
            <person name="Kawaji H."/>
            <person name="Kawagashira N."/>
            <person name="Kawashima T."/>
            <person name="Kojima M."/>
            <person name="Kondo S."/>
            <person name="Konno H."/>
            <person name="Nakano K."/>
            <person name="Ninomiya N."/>
            <person name="Nishio T."/>
            <person name="Okada M."/>
            <person name="Plessy C."/>
            <person name="Shibata K."/>
            <person name="Shiraki T."/>
            <person name="Suzuki S."/>
            <person name="Tagami M."/>
            <person name="Waki K."/>
            <person name="Watahiki A."/>
            <person name="Okamura-Oho Y."/>
            <person name="Suzuki H."/>
            <person name="Kawai J."/>
            <person name="Hayashizaki Y."/>
        </authorList>
    </citation>
    <scope>NUCLEOTIDE SEQUENCE [LARGE SCALE MRNA]</scope>
    <source>
        <strain>C57BL/6J</strain>
        <strain>DBA/2J</strain>
        <tissue>Kidney</tissue>
        <tissue>Urinary bladder</tissue>
    </source>
</reference>
<reference key="2">
    <citation type="journal article" date="2004" name="Genome Res.">
        <title>The status, quality, and expansion of the NIH full-length cDNA project: the Mammalian Gene Collection (MGC).</title>
        <authorList>
            <consortium name="The MGC Project Team"/>
        </authorList>
    </citation>
    <scope>NUCLEOTIDE SEQUENCE [LARGE SCALE MRNA]</scope>
    <source>
        <strain>FVB/N</strain>
        <tissue>Liver</tissue>
    </source>
</reference>
<sequence>MKPPQRRRRVPARYVGEATGPTAWSPREMRHLLRLLQARRGQPEPDAAELAQELRGRSEAEICRFIQQLKGRVVREAIQKMQPGGREGPRHQGTPLPAPVEVWMDLAEKLTGPMEEALTAAFSQVLTIAAAEPLSLLHSRPGKPTKARGKALVFLSNQDGQKDPASEGSGPVPMTAADPTREASVSDPKASGANPETSGLASEVTVPDPDAPTKSLAGSSTERDLAVDFEKIYKYLSFSSRGGHGPELSAAESAVVLNLLMALPEELSHLPCTALLEHMTKTYAQLMAPQTALPGEKRPRPGTEDGGTGSTGPEEPDQASPQASEPIEPRLAWKAVGICPLNPFLVPLGLVSQAPSPSR</sequence>
<name>SNPC2_MOUSE</name>
<proteinExistence type="evidence at transcript level"/>
<feature type="chain" id="PRO_0000072021" description="snRNA-activating protein complex subunit 2">
    <location>
        <begin position="1"/>
        <end position="359"/>
    </location>
</feature>
<feature type="region of interest" description="Disordered" evidence="2">
    <location>
        <begin position="1"/>
        <end position="22"/>
    </location>
</feature>
<feature type="region of interest" description="Disordered" evidence="2">
    <location>
        <begin position="157"/>
        <end position="221"/>
    </location>
</feature>
<feature type="region of interest" description="Disordered" evidence="2">
    <location>
        <begin position="291"/>
        <end position="327"/>
    </location>
</feature>
<feature type="compositionally biased region" description="Basic residues" evidence="2">
    <location>
        <begin position="1"/>
        <end position="11"/>
    </location>
</feature>
<feature type="sequence conflict" description="In Ref. 1; BAC29039." evidence="3" ref="1">
    <original>A</original>
    <variation>D</variation>
    <location>
        <position position="51"/>
    </location>
</feature>
<feature type="sequence conflict" description="In Ref. 1; BAC29039." evidence="3" ref="1">
    <original>P</original>
    <variation>T</variation>
    <location>
        <position position="195"/>
    </location>
</feature>
<protein>
    <recommendedName>
        <fullName>snRNA-activating protein complex subunit 2</fullName>
        <shortName>SNAPc subunit 2</shortName>
    </recommendedName>
    <alternativeName>
        <fullName>Small nuclear RNA-activating complex polypeptide 2</fullName>
    </alternativeName>
    <alternativeName>
        <fullName>snRNA-activating protein complex 45 kDa subunit</fullName>
        <shortName>SNAPc 45 kDa subunit</shortName>
    </alternativeName>
</protein>
<accession>Q91XA5</accession>
<accession>Q3UK17</accession>
<accession>Q8CBS9</accession>
<gene>
    <name type="primary">Snapc2</name>
</gene>
<evidence type="ECO:0000250" key="1"/>
<evidence type="ECO:0000256" key="2">
    <source>
        <dbReference type="SAM" id="MobiDB-lite"/>
    </source>
</evidence>
<evidence type="ECO:0000305" key="3"/>
<organism>
    <name type="scientific">Mus musculus</name>
    <name type="common">Mouse</name>
    <dbReference type="NCBI Taxonomy" id="10090"/>
    <lineage>
        <taxon>Eukaryota</taxon>
        <taxon>Metazoa</taxon>
        <taxon>Chordata</taxon>
        <taxon>Craniata</taxon>
        <taxon>Vertebrata</taxon>
        <taxon>Euteleostomi</taxon>
        <taxon>Mammalia</taxon>
        <taxon>Eutheria</taxon>
        <taxon>Euarchontoglires</taxon>
        <taxon>Glires</taxon>
        <taxon>Rodentia</taxon>
        <taxon>Myomorpha</taxon>
        <taxon>Muroidea</taxon>
        <taxon>Muridae</taxon>
        <taxon>Murinae</taxon>
        <taxon>Mus</taxon>
        <taxon>Mus</taxon>
    </lineage>
</organism>
<dbReference type="EMBL" id="AK035340">
    <property type="protein sequence ID" value="BAC29039.1"/>
    <property type="molecule type" value="mRNA"/>
</dbReference>
<dbReference type="EMBL" id="AK075569">
    <property type="protein sequence ID" value="BAC35827.1"/>
    <property type="molecule type" value="mRNA"/>
</dbReference>
<dbReference type="EMBL" id="AK146218">
    <property type="protein sequence ID" value="BAE26986.1"/>
    <property type="molecule type" value="mRNA"/>
</dbReference>
<dbReference type="EMBL" id="BC011147">
    <property type="protein sequence ID" value="AAH11147.1"/>
    <property type="molecule type" value="mRNA"/>
</dbReference>
<dbReference type="CCDS" id="CCDS22081.1"/>
<dbReference type="RefSeq" id="NP_598729.1">
    <property type="nucleotide sequence ID" value="NM_133968.1"/>
</dbReference>
<dbReference type="FunCoup" id="Q91XA5">
    <property type="interactions" value="1439"/>
</dbReference>
<dbReference type="STRING" id="10090.ENSMUSP00000011981"/>
<dbReference type="GlyGen" id="Q91XA5">
    <property type="glycosylation" value="1 site"/>
</dbReference>
<dbReference type="iPTMnet" id="Q91XA5"/>
<dbReference type="PhosphoSitePlus" id="Q91XA5"/>
<dbReference type="PaxDb" id="10090-ENSMUSP00000011981"/>
<dbReference type="ProteomicsDB" id="261292"/>
<dbReference type="Antibodypedia" id="12285">
    <property type="antibodies" value="149 antibodies from 23 providers"/>
</dbReference>
<dbReference type="DNASU" id="102209"/>
<dbReference type="Ensembl" id="ENSMUST00000011981.5">
    <property type="protein sequence ID" value="ENSMUSP00000011981.4"/>
    <property type="gene ID" value="ENSMUSG00000011837.5"/>
</dbReference>
<dbReference type="GeneID" id="102209"/>
<dbReference type="KEGG" id="mmu:102209"/>
<dbReference type="UCSC" id="uc009kto.1">
    <property type="organism name" value="mouse"/>
</dbReference>
<dbReference type="AGR" id="MGI:1914861"/>
<dbReference type="CTD" id="6618"/>
<dbReference type="MGI" id="MGI:1914861">
    <property type="gene designation" value="Snapc2"/>
</dbReference>
<dbReference type="VEuPathDB" id="HostDB:ENSMUSG00000011837"/>
<dbReference type="eggNOG" id="ENOG502S260">
    <property type="taxonomic scope" value="Eukaryota"/>
</dbReference>
<dbReference type="GeneTree" id="ENSGT00390000017407"/>
<dbReference type="HOGENOM" id="CLU_048442_0_0_1"/>
<dbReference type="InParanoid" id="Q91XA5"/>
<dbReference type="OMA" id="APIEVWI"/>
<dbReference type="OrthoDB" id="5990578at2759"/>
<dbReference type="PhylomeDB" id="Q91XA5"/>
<dbReference type="TreeFam" id="TF336993"/>
<dbReference type="Reactome" id="R-MMU-6807505">
    <property type="pathway name" value="RNA polymerase II transcribes snRNA genes"/>
</dbReference>
<dbReference type="Reactome" id="R-MMU-76071">
    <property type="pathway name" value="RNA Polymerase III Transcription Initiation From Type 3 Promoter"/>
</dbReference>
<dbReference type="BioGRID-ORCS" id="102209">
    <property type="hits" value="18 hits in 78 CRISPR screens"/>
</dbReference>
<dbReference type="ChiTaRS" id="Snapc2">
    <property type="organism name" value="mouse"/>
</dbReference>
<dbReference type="PRO" id="PR:Q91XA5"/>
<dbReference type="Proteomes" id="UP000000589">
    <property type="component" value="Chromosome 8"/>
</dbReference>
<dbReference type="RNAct" id="Q91XA5">
    <property type="molecule type" value="protein"/>
</dbReference>
<dbReference type="Bgee" id="ENSMUSG00000011837">
    <property type="expression patterns" value="Expressed in internal carotid artery and 263 other cell types or tissues"/>
</dbReference>
<dbReference type="ExpressionAtlas" id="Q91XA5">
    <property type="expression patterns" value="baseline and differential"/>
</dbReference>
<dbReference type="GO" id="GO:0005829">
    <property type="term" value="C:cytosol"/>
    <property type="evidence" value="ECO:0007669"/>
    <property type="project" value="Ensembl"/>
</dbReference>
<dbReference type="GO" id="GO:0016604">
    <property type="term" value="C:nuclear body"/>
    <property type="evidence" value="ECO:0007669"/>
    <property type="project" value="Ensembl"/>
</dbReference>
<dbReference type="GO" id="GO:0016251">
    <property type="term" value="F:RNA polymerase II general transcription initiation factor activity"/>
    <property type="evidence" value="ECO:0007669"/>
    <property type="project" value="InterPro"/>
</dbReference>
<dbReference type="GO" id="GO:0009301">
    <property type="term" value="P:snRNA transcription"/>
    <property type="evidence" value="ECO:0007669"/>
    <property type="project" value="InterPro"/>
</dbReference>
<dbReference type="InterPro" id="IPR021281">
    <property type="entry name" value="SNAPC2"/>
</dbReference>
<dbReference type="PANTHER" id="PTHR15132">
    <property type="entry name" value="SNRNA-ACTIVATING PROTEIN COMPLEX SUBUNIT 2"/>
    <property type="match status" value="1"/>
</dbReference>
<dbReference type="PANTHER" id="PTHR15132:SF1">
    <property type="entry name" value="SNRNA-ACTIVATING PROTEIN COMPLEX SUBUNIT 2"/>
    <property type="match status" value="1"/>
</dbReference>
<dbReference type="Pfam" id="PF11035">
    <property type="entry name" value="SNAPC2"/>
    <property type="match status" value="1"/>
</dbReference>